<organism>
    <name type="scientific">Nocardia uniformis subsp. tsuyamanensis</name>
    <dbReference type="NCBI Taxonomy" id="96045"/>
    <lineage>
        <taxon>Bacteria</taxon>
        <taxon>Bacillati</taxon>
        <taxon>Actinomycetota</taxon>
        <taxon>Actinomycetes</taxon>
        <taxon>Mycobacteriales</taxon>
        <taxon>Nocardiaceae</taxon>
        <taxon>Nocardia</taxon>
    </lineage>
</organism>
<evidence type="ECO:0000250" key="1">
    <source>
        <dbReference type="UniProtKB" id="Q7M523"/>
    </source>
</evidence>
<evidence type="ECO:0000269" key="2">
    <source>
    </source>
</evidence>
<evidence type="ECO:0000303" key="3">
    <source>
    </source>
</evidence>
<evidence type="ECO:0000303" key="4">
    <source>
    </source>
</evidence>
<evidence type="ECO:0000305" key="5"/>
<evidence type="ECO:0000305" key="6">
    <source>
    </source>
</evidence>
<gene>
    <name evidence="4" type="primary">nocJ</name>
</gene>
<feature type="chain" id="PRO_0000456703" description="Nocardicin C-9' epimerase">
    <location>
        <begin position="1"/>
        <end position="327"/>
    </location>
</feature>
<feature type="modified residue" description="N6-(pyridoxal phosphate)lysine" evidence="1">
    <location>
        <position position="43"/>
    </location>
</feature>
<accession>Q5J1R2</accession>
<keyword id="KW-0045">Antibiotic biosynthesis</keyword>
<keyword id="KW-0413">Isomerase</keyword>
<keyword id="KW-0663">Pyridoxal phosphate</keyword>
<comment type="function">
    <text evidence="2">Involved in the biosynthesis of the beta-lactam antibiotic nocardicin A (PubMed:15252031). Catalyzes the interconversion of the nocardicin homoseryl side chain in both nocardicin A with isonocardicin A, and nocardicin C with isonocardicin C (PubMed:15252031).</text>
</comment>
<comment type="catalytic activity">
    <reaction evidence="2">
        <text>isonocardicin C = nocardicin C</text>
        <dbReference type="Rhea" id="RHEA:42132"/>
        <dbReference type="ChEBI" id="CHEBI:131920"/>
        <dbReference type="ChEBI" id="CHEBI:131948"/>
        <dbReference type="EC" id="5.1.1.14"/>
    </reaction>
</comment>
<comment type="catalytic activity">
    <reaction evidence="2">
        <text>isonocardicin A = nocardicin A</text>
        <dbReference type="Rhea" id="RHEA:22792"/>
        <dbReference type="ChEBI" id="CHEBI:77633"/>
        <dbReference type="ChEBI" id="CHEBI:77658"/>
        <dbReference type="EC" id="5.1.1.14"/>
    </reaction>
</comment>
<comment type="cofactor">
    <cofactor evidence="2">
        <name>pyridoxal 5'-phosphate</name>
        <dbReference type="ChEBI" id="CHEBI:597326"/>
    </cofactor>
</comment>
<comment type="biophysicochemical properties">
    <kinetics>
        <KM evidence="2">70 uM for isonocardicin A</KM>
        <KM evidence="2">36 uM for nocardicin A</KM>
        <text evidence="2">kcat is 0.59 sec(-1) with isonocardicin A as substrate. kcat is 0.35 sec(-1) with nocardicin A as substrate.</text>
    </kinetics>
</comment>
<comment type="pathway">
    <text evidence="2 6">Antibiotic biosynthesis.</text>
</comment>
<comment type="disruption phenotype">
    <text evidence="2">Disruption of the gene abolishes nocardicin A production, but the mutant retains the ability to produce the intermediate isonocardicin A.</text>
</comment>
<comment type="similarity">
    <text evidence="5">Belongs to the ACC deaminase/D-cysteine desulfhydrase family.</text>
</comment>
<dbReference type="EC" id="5.1.1.14" evidence="2"/>
<dbReference type="EMBL" id="AY541063">
    <property type="protein sequence ID" value="AAT09799.1"/>
    <property type="molecule type" value="Genomic_DNA"/>
</dbReference>
<dbReference type="SMR" id="Q5J1R2"/>
<dbReference type="KEGG" id="ag:AAT09799"/>
<dbReference type="BioCyc" id="MetaCyc:MONOMER-13595"/>
<dbReference type="GO" id="GO:0019148">
    <property type="term" value="F:D-cysteine desulfhydrase activity"/>
    <property type="evidence" value="ECO:0007669"/>
    <property type="project" value="TreeGrafter"/>
</dbReference>
<dbReference type="GO" id="GO:0016853">
    <property type="term" value="F:isomerase activity"/>
    <property type="evidence" value="ECO:0007669"/>
    <property type="project" value="UniProtKB-KW"/>
</dbReference>
<dbReference type="GO" id="GO:0017000">
    <property type="term" value="P:antibiotic biosynthetic process"/>
    <property type="evidence" value="ECO:0007669"/>
    <property type="project" value="UniProtKB-KW"/>
</dbReference>
<dbReference type="GO" id="GO:0170033">
    <property type="term" value="P:L-amino acid metabolic process"/>
    <property type="evidence" value="ECO:0007669"/>
    <property type="project" value="UniProtKB-ARBA"/>
</dbReference>
<dbReference type="GO" id="GO:0170039">
    <property type="term" value="P:proteinogenic amino acid metabolic process"/>
    <property type="evidence" value="ECO:0007669"/>
    <property type="project" value="UniProtKB-ARBA"/>
</dbReference>
<dbReference type="Gene3D" id="3.40.50.1100">
    <property type="match status" value="2"/>
</dbReference>
<dbReference type="InterPro" id="IPR027278">
    <property type="entry name" value="ACCD_DCysDesulf"/>
</dbReference>
<dbReference type="InterPro" id="IPR001926">
    <property type="entry name" value="TrpB-like_PALP"/>
</dbReference>
<dbReference type="InterPro" id="IPR036052">
    <property type="entry name" value="TrpB-like_PALP_sf"/>
</dbReference>
<dbReference type="PANTHER" id="PTHR43780">
    <property type="entry name" value="1-AMINOCYCLOPROPANE-1-CARBOXYLATE DEAMINASE-RELATED"/>
    <property type="match status" value="1"/>
</dbReference>
<dbReference type="PANTHER" id="PTHR43780:SF2">
    <property type="entry name" value="1-AMINOCYCLOPROPANE-1-CARBOXYLATE DEAMINASE-RELATED"/>
    <property type="match status" value="1"/>
</dbReference>
<dbReference type="Pfam" id="PF00291">
    <property type="entry name" value="PALP"/>
    <property type="match status" value="1"/>
</dbReference>
<dbReference type="PIRSF" id="PIRSF006278">
    <property type="entry name" value="ACCD_DCysDesulf"/>
    <property type="match status" value="1"/>
</dbReference>
<dbReference type="SUPFAM" id="SSF53686">
    <property type="entry name" value="Tryptophan synthase beta subunit-like PLP-dependent enzymes"/>
    <property type="match status" value="1"/>
</dbReference>
<reference key="1">
    <citation type="journal article" date="2004" name="Chem. Biol.">
        <title>The biosynthetic gene cluster for a monocyclic beta-lactam antibiotic, nocardicin A.</title>
        <authorList>
            <person name="Gunsior M."/>
            <person name="Breazeale S.D."/>
            <person name="Lind A.J."/>
            <person name="Ravel J."/>
            <person name="Janc J.W."/>
            <person name="Townsend C.A."/>
        </authorList>
    </citation>
    <scope>NUCLEOTIDE SEQUENCE [GENOMIC DNA]</scope>
    <source>
        <strain>ATCC 21806 / CECT 3282 / JCM 3279 / WS 1571</strain>
    </source>
</reference>
<reference key="2">
    <citation type="journal article" date="2004" name="J. Biol. Chem.">
        <title>Mutational analysis and characterization of nocardicin C-9' epimerase.</title>
        <authorList>
            <person name="Kelly W.L."/>
            <person name="Townsend C.A."/>
        </authorList>
    </citation>
    <scope>FUNCTION</scope>
    <scope>CATALYTIC ACTIVITY</scope>
    <scope>COFACTOR</scope>
    <scope>BIOPHYSICOCHEMICAL PROPERTIES</scope>
    <scope>PATHWAY</scope>
    <scope>DISRUPTION PHENOTYPE</scope>
    <source>
        <strain>ATCC 21806 / CECT 3282 / JCM 3279 / WS 1571</strain>
    </source>
</reference>
<sequence length="327" mass="33559">MGALPRVPLITAPTRLHPVDGLAPRRVLVKRDDENSPVFGGCKTRALEFVLGAARAAGATAVLTSGTAGSNHVAATALHAGRLGFRVTALVLPQEPGALVARNLRLAAGAGARLEPVPDGVSVHPDRERHRAAVAELRERGERVHVIPFGGADPVAGVAHALAGLELAEQARGLPGPLRVHLPAASTLTAAGIAAGLALSGLPFQVTAVDVVGSSSTLGPGLLGRAREVAALLGGPADAVRPEHVRHVGYAGAPYGVPDPEAGRCADLLREAADVRVDECYGAKAFHHLLGEVGDADGTHLFWHTGSTREAGEVFGPVPPELLCYVE</sequence>
<proteinExistence type="evidence at protein level"/>
<protein>
    <recommendedName>
        <fullName evidence="3">Nocardicin C-9' epimerase</fullName>
        <ecNumber evidence="2">5.1.1.14</ecNumber>
    </recommendedName>
    <alternativeName>
        <fullName evidence="5">Nocardicin-A epimerase</fullName>
    </alternativeName>
</protein>
<name>NOCJ_NOCUT</name>